<comment type="similarity">
    <text evidence="1">Belongs to the UPF0102 family.</text>
</comment>
<evidence type="ECO:0000255" key="1">
    <source>
        <dbReference type="HAMAP-Rule" id="MF_00048"/>
    </source>
</evidence>
<reference key="1">
    <citation type="journal article" date="2008" name="PLoS ONE">
        <title>Genome biology of Actinobacillus pleuropneumoniae JL03, an isolate of serotype 3 prevalent in China.</title>
        <authorList>
            <person name="Xu Z."/>
            <person name="Zhou Y."/>
            <person name="Li L."/>
            <person name="Zhou R."/>
            <person name="Xiao S."/>
            <person name="Wan Y."/>
            <person name="Zhang S."/>
            <person name="Wang K."/>
            <person name="Li W."/>
            <person name="Li L."/>
            <person name="Jin H."/>
            <person name="Kang M."/>
            <person name="Dalai B."/>
            <person name="Li T."/>
            <person name="Liu L."/>
            <person name="Cheng Y."/>
            <person name="Zhang L."/>
            <person name="Xu T."/>
            <person name="Zheng H."/>
            <person name="Pu S."/>
            <person name="Wang B."/>
            <person name="Gu W."/>
            <person name="Zhang X.L."/>
            <person name="Zhu G.-F."/>
            <person name="Wang S."/>
            <person name="Zhao G.-P."/>
            <person name="Chen H."/>
        </authorList>
    </citation>
    <scope>NUCLEOTIDE SEQUENCE [LARGE SCALE GENOMIC DNA]</scope>
    <source>
        <strain>JL03</strain>
    </source>
</reference>
<accession>B0BQV2</accession>
<proteinExistence type="inferred from homology"/>
<organism>
    <name type="scientific">Actinobacillus pleuropneumoniae serotype 3 (strain JL03)</name>
    <dbReference type="NCBI Taxonomy" id="434271"/>
    <lineage>
        <taxon>Bacteria</taxon>
        <taxon>Pseudomonadati</taxon>
        <taxon>Pseudomonadota</taxon>
        <taxon>Gammaproteobacteria</taxon>
        <taxon>Pasteurellales</taxon>
        <taxon>Pasteurellaceae</taxon>
        <taxon>Actinobacillus</taxon>
    </lineage>
</organism>
<gene>
    <name type="ordered locus">APJL_1381</name>
</gene>
<protein>
    <recommendedName>
        <fullName evidence="1">UPF0102 protein APJL_1381</fullName>
    </recommendedName>
</protein>
<sequence>MAQWKTLTKRSQGANFEQKAREFLERNGLKFIAANQQFKCGELDLIMRQGDTFVFVEVRQRKSNRFGSAVESIDYRKQQKWLDAANMWLFTRHKQSLDTANCRFDVVAFEGNDPPLWIPNFLG</sequence>
<name>Y1381_ACTPJ</name>
<dbReference type="EMBL" id="CP000687">
    <property type="protein sequence ID" value="ABY69937.1"/>
    <property type="molecule type" value="Genomic_DNA"/>
</dbReference>
<dbReference type="RefSeq" id="WP_012263197.1">
    <property type="nucleotide sequence ID" value="NC_010278.1"/>
</dbReference>
<dbReference type="SMR" id="B0BQV2"/>
<dbReference type="KEGG" id="apj:APJL_1381"/>
<dbReference type="HOGENOM" id="CLU_115353_1_0_6"/>
<dbReference type="Proteomes" id="UP000008547">
    <property type="component" value="Chromosome"/>
</dbReference>
<dbReference type="GO" id="GO:0003676">
    <property type="term" value="F:nucleic acid binding"/>
    <property type="evidence" value="ECO:0007669"/>
    <property type="project" value="InterPro"/>
</dbReference>
<dbReference type="CDD" id="cd20736">
    <property type="entry name" value="PoNe_Nuclease"/>
    <property type="match status" value="1"/>
</dbReference>
<dbReference type="Gene3D" id="3.40.1350.10">
    <property type="match status" value="1"/>
</dbReference>
<dbReference type="HAMAP" id="MF_00048">
    <property type="entry name" value="UPF0102"/>
    <property type="match status" value="1"/>
</dbReference>
<dbReference type="InterPro" id="IPR011335">
    <property type="entry name" value="Restrct_endonuc-II-like"/>
</dbReference>
<dbReference type="InterPro" id="IPR011856">
    <property type="entry name" value="tRNA_endonuc-like_dom_sf"/>
</dbReference>
<dbReference type="InterPro" id="IPR003509">
    <property type="entry name" value="UPF0102_YraN-like"/>
</dbReference>
<dbReference type="NCBIfam" id="NF009150">
    <property type="entry name" value="PRK12497.1-3"/>
    <property type="match status" value="1"/>
</dbReference>
<dbReference type="NCBIfam" id="TIGR00252">
    <property type="entry name" value="YraN family protein"/>
    <property type="match status" value="1"/>
</dbReference>
<dbReference type="PANTHER" id="PTHR34039">
    <property type="entry name" value="UPF0102 PROTEIN YRAN"/>
    <property type="match status" value="1"/>
</dbReference>
<dbReference type="PANTHER" id="PTHR34039:SF1">
    <property type="entry name" value="UPF0102 PROTEIN YRAN"/>
    <property type="match status" value="1"/>
</dbReference>
<dbReference type="Pfam" id="PF02021">
    <property type="entry name" value="UPF0102"/>
    <property type="match status" value="1"/>
</dbReference>
<dbReference type="SUPFAM" id="SSF52980">
    <property type="entry name" value="Restriction endonuclease-like"/>
    <property type="match status" value="1"/>
</dbReference>
<feature type="chain" id="PRO_1000091224" description="UPF0102 protein APJL_1381">
    <location>
        <begin position="1"/>
        <end position="123"/>
    </location>
</feature>